<dbReference type="EMBL" id="CP000046">
    <property type="protein sequence ID" value="AAW38232.1"/>
    <property type="molecule type" value="Genomic_DNA"/>
</dbReference>
<dbReference type="RefSeq" id="WP_000683931.1">
    <property type="nucleotide sequence ID" value="NZ_JBGOFO010000003.1"/>
</dbReference>
<dbReference type="SMR" id="Q5HFK1"/>
<dbReference type="KEGG" id="sac:SACOL1616"/>
<dbReference type="HOGENOM" id="CLU_037423_1_0_9"/>
<dbReference type="Proteomes" id="UP000000530">
    <property type="component" value="Chromosome"/>
</dbReference>
<dbReference type="GO" id="GO:0005737">
    <property type="term" value="C:cytoplasm"/>
    <property type="evidence" value="ECO:0007669"/>
    <property type="project" value="TreeGrafter"/>
</dbReference>
<dbReference type="GO" id="GO:0046872">
    <property type="term" value="F:metal ion binding"/>
    <property type="evidence" value="ECO:0007669"/>
    <property type="project" value="UniProtKB-KW"/>
</dbReference>
<dbReference type="FunFam" id="3.40.1390.30:FF:000001">
    <property type="entry name" value="GTP cyclohydrolase 1 type 2"/>
    <property type="match status" value="1"/>
</dbReference>
<dbReference type="FunFam" id="3.30.70.120:FF:000006">
    <property type="entry name" value="GTP cyclohydrolase 1 type 2 homolog"/>
    <property type="match status" value="1"/>
</dbReference>
<dbReference type="Gene3D" id="3.30.70.120">
    <property type="match status" value="1"/>
</dbReference>
<dbReference type="Gene3D" id="3.40.1390.30">
    <property type="entry name" value="NIF3 (NGG1p interacting factor 3)-like"/>
    <property type="match status" value="1"/>
</dbReference>
<dbReference type="InterPro" id="IPR002678">
    <property type="entry name" value="DUF34/NIF3"/>
</dbReference>
<dbReference type="InterPro" id="IPR017221">
    <property type="entry name" value="DUF34/NIF3_bac"/>
</dbReference>
<dbReference type="InterPro" id="IPR036069">
    <property type="entry name" value="DUF34/NIF3_sf"/>
</dbReference>
<dbReference type="InterPro" id="IPR015867">
    <property type="entry name" value="N-reg_PII/ATP_PRibTrfase_C"/>
</dbReference>
<dbReference type="NCBIfam" id="TIGR00486">
    <property type="entry name" value="YbgI_SA1388"/>
    <property type="match status" value="1"/>
</dbReference>
<dbReference type="PANTHER" id="PTHR13799:SF14">
    <property type="entry name" value="GTP CYCLOHYDROLASE 1 TYPE 2 HOMOLOG"/>
    <property type="match status" value="1"/>
</dbReference>
<dbReference type="PANTHER" id="PTHR13799">
    <property type="entry name" value="NGG1 INTERACTING FACTOR 3"/>
    <property type="match status" value="1"/>
</dbReference>
<dbReference type="Pfam" id="PF01784">
    <property type="entry name" value="DUF34_NIF3"/>
    <property type="match status" value="1"/>
</dbReference>
<dbReference type="PIRSF" id="PIRSF037489">
    <property type="entry name" value="UCP037489_NIF3_YqfO"/>
    <property type="match status" value="1"/>
</dbReference>
<dbReference type="SUPFAM" id="SSF102705">
    <property type="entry name" value="NIF3 (NGG1p interacting factor 3)-like"/>
    <property type="match status" value="1"/>
</dbReference>
<evidence type="ECO:0000250" key="1">
    <source>
        <dbReference type="UniProtKB" id="P67272"/>
    </source>
</evidence>
<evidence type="ECO:0000305" key="2"/>
<keyword id="KW-0479">Metal-binding</keyword>
<keyword id="KW-0862">Zinc</keyword>
<gene>
    <name type="ordered locus">SACOL1616</name>
</gene>
<accession>Q5HFK1</accession>
<reference key="1">
    <citation type="journal article" date="2005" name="J. Bacteriol.">
        <title>Insights on evolution of virulence and resistance from the complete genome analysis of an early methicillin-resistant Staphylococcus aureus strain and a biofilm-producing methicillin-resistant Staphylococcus epidermidis strain.</title>
        <authorList>
            <person name="Gill S.R."/>
            <person name="Fouts D.E."/>
            <person name="Archer G.L."/>
            <person name="Mongodin E.F."/>
            <person name="DeBoy R.T."/>
            <person name="Ravel J."/>
            <person name="Paulsen I.T."/>
            <person name="Kolonay J.F."/>
            <person name="Brinkac L.M."/>
            <person name="Beanan M.J."/>
            <person name="Dodson R.J."/>
            <person name="Daugherty S.C."/>
            <person name="Madupu R."/>
            <person name="Angiuoli S.V."/>
            <person name="Durkin A.S."/>
            <person name="Haft D.H."/>
            <person name="Vamathevan J.J."/>
            <person name="Khouri H."/>
            <person name="Utterback T.R."/>
            <person name="Lee C."/>
            <person name="Dimitrov G."/>
            <person name="Jiang L."/>
            <person name="Qin H."/>
            <person name="Weidman J."/>
            <person name="Tran K."/>
            <person name="Kang K.H."/>
            <person name="Hance I.R."/>
            <person name="Nelson K.E."/>
            <person name="Fraser C.M."/>
        </authorList>
    </citation>
    <scope>NUCLEOTIDE SEQUENCE [LARGE SCALE GENOMIC DNA]</scope>
    <source>
        <strain>COL</strain>
    </source>
</reference>
<organism>
    <name type="scientific">Staphylococcus aureus (strain COL)</name>
    <dbReference type="NCBI Taxonomy" id="93062"/>
    <lineage>
        <taxon>Bacteria</taxon>
        <taxon>Bacillati</taxon>
        <taxon>Bacillota</taxon>
        <taxon>Bacilli</taxon>
        <taxon>Bacillales</taxon>
        <taxon>Staphylococcaceae</taxon>
        <taxon>Staphylococcus</taxon>
    </lineage>
</organism>
<sequence>MKIADLMTLLDHHVPFSTAESWDNVGLLIGDEDVEVTGVLTALDCTLEVVNEAIEKGYNTIISHHPLIFKGVTSLKANGYGLIIRKLIQHDINLIAMHTNLDVNPYGVNMMLAKAMGLKNISIINNQQDVYYKVQTYIPKDNVGPFKDKLSENGLAQEGNYEYCFFESEGRGQFKPVGEANPTIGQIDKIEYVDEVKIEFMIDAYQKSRAEQLIKQYHPYETPVFDFIEIKQTSLYGLGVMAEVDNQMTLEDFAADIKSKLNIPSVRFVGESNQKIKRIAIIGGSGIGYEYQAVQQGADVFVTGDIKHHDALDAKIHGVNLIDINHYSEYVMKEGLKALLMNWFNTEKINLDVEASTINTDPFQYI</sequence>
<name>GCH1L_STAAC</name>
<comment type="subunit">
    <text evidence="1">Homohexamer.</text>
</comment>
<comment type="similarity">
    <text evidence="2">Belongs to the GTP cyclohydrolase I type 2/NIF3 family.</text>
</comment>
<protein>
    <recommendedName>
        <fullName>GTP cyclohydrolase 1 type 2 homolog</fullName>
    </recommendedName>
</protein>
<proteinExistence type="inferred from homology"/>
<feature type="chain" id="PRO_0000147327" description="GTP cyclohydrolase 1 type 2 homolog">
    <location>
        <begin position="1"/>
        <end position="366"/>
    </location>
</feature>
<feature type="binding site" evidence="1">
    <location>
        <position position="64"/>
    </location>
    <ligand>
        <name>Zn(2+)</name>
        <dbReference type="ChEBI" id="CHEBI:29105"/>
        <label>1</label>
    </ligand>
</feature>
<feature type="binding site" evidence="1">
    <location>
        <position position="65"/>
    </location>
    <ligand>
        <name>Zn(2+)</name>
        <dbReference type="ChEBI" id="CHEBI:29105"/>
        <label>2</label>
    </ligand>
</feature>
<feature type="binding site" evidence="1">
    <location>
        <position position="102"/>
    </location>
    <ligand>
        <name>Zn(2+)</name>
        <dbReference type="ChEBI" id="CHEBI:29105"/>
        <label>1</label>
    </ligand>
</feature>
<feature type="binding site" evidence="1">
    <location>
        <position position="326"/>
    </location>
    <ligand>
        <name>Zn(2+)</name>
        <dbReference type="ChEBI" id="CHEBI:29105"/>
        <label>2</label>
    </ligand>
</feature>
<feature type="binding site" evidence="1">
    <location>
        <position position="329"/>
    </location>
    <ligand>
        <name>Zn(2+)</name>
        <dbReference type="ChEBI" id="CHEBI:29105"/>
        <label>1</label>
    </ligand>
</feature>
<feature type="binding site" evidence="1">
    <location>
        <position position="329"/>
    </location>
    <ligand>
        <name>Zn(2+)</name>
        <dbReference type="ChEBI" id="CHEBI:29105"/>
        <label>2</label>
    </ligand>
</feature>